<dbReference type="EC" id="4.3.2.10" evidence="1"/>
<dbReference type="EC" id="3.5.1.2" evidence="1"/>
<dbReference type="EMBL" id="BA000028">
    <property type="protein sequence ID" value="BAC12505.1"/>
    <property type="molecule type" value="Genomic_DNA"/>
</dbReference>
<dbReference type="RefSeq" id="WP_011064952.1">
    <property type="nucleotide sequence ID" value="NC_004193.1"/>
</dbReference>
<dbReference type="SMR" id="Q8ESS0"/>
<dbReference type="STRING" id="221109.gene:10732753"/>
<dbReference type="KEGG" id="oih:OB0549"/>
<dbReference type="eggNOG" id="COG0118">
    <property type="taxonomic scope" value="Bacteria"/>
</dbReference>
<dbReference type="HOGENOM" id="CLU_071837_2_2_9"/>
<dbReference type="OrthoDB" id="9807137at2"/>
<dbReference type="PhylomeDB" id="Q8ESS0"/>
<dbReference type="UniPathway" id="UPA00031">
    <property type="reaction ID" value="UER00010"/>
</dbReference>
<dbReference type="Proteomes" id="UP000000822">
    <property type="component" value="Chromosome"/>
</dbReference>
<dbReference type="GO" id="GO:0005737">
    <property type="term" value="C:cytoplasm"/>
    <property type="evidence" value="ECO:0007669"/>
    <property type="project" value="UniProtKB-SubCell"/>
</dbReference>
<dbReference type="GO" id="GO:0004359">
    <property type="term" value="F:glutaminase activity"/>
    <property type="evidence" value="ECO:0007669"/>
    <property type="project" value="UniProtKB-EC"/>
</dbReference>
<dbReference type="GO" id="GO:0000107">
    <property type="term" value="F:imidazoleglycerol-phosphate synthase activity"/>
    <property type="evidence" value="ECO:0007669"/>
    <property type="project" value="UniProtKB-UniRule"/>
</dbReference>
<dbReference type="GO" id="GO:0016829">
    <property type="term" value="F:lyase activity"/>
    <property type="evidence" value="ECO:0007669"/>
    <property type="project" value="UniProtKB-KW"/>
</dbReference>
<dbReference type="GO" id="GO:0000105">
    <property type="term" value="P:L-histidine biosynthetic process"/>
    <property type="evidence" value="ECO:0007669"/>
    <property type="project" value="UniProtKB-UniRule"/>
</dbReference>
<dbReference type="CDD" id="cd01748">
    <property type="entry name" value="GATase1_IGP_Synthase"/>
    <property type="match status" value="1"/>
</dbReference>
<dbReference type="Gene3D" id="3.40.50.880">
    <property type="match status" value="1"/>
</dbReference>
<dbReference type="HAMAP" id="MF_00278">
    <property type="entry name" value="HisH"/>
    <property type="match status" value="1"/>
</dbReference>
<dbReference type="InterPro" id="IPR029062">
    <property type="entry name" value="Class_I_gatase-like"/>
</dbReference>
<dbReference type="InterPro" id="IPR017926">
    <property type="entry name" value="GATASE"/>
</dbReference>
<dbReference type="InterPro" id="IPR010139">
    <property type="entry name" value="Imidazole-glycPsynth_HisH"/>
</dbReference>
<dbReference type="NCBIfam" id="TIGR01855">
    <property type="entry name" value="IMP_synth_hisH"/>
    <property type="match status" value="1"/>
</dbReference>
<dbReference type="PANTHER" id="PTHR42701">
    <property type="entry name" value="IMIDAZOLE GLYCEROL PHOSPHATE SYNTHASE SUBUNIT HISH"/>
    <property type="match status" value="1"/>
</dbReference>
<dbReference type="PANTHER" id="PTHR42701:SF1">
    <property type="entry name" value="IMIDAZOLE GLYCEROL PHOSPHATE SYNTHASE SUBUNIT HISH"/>
    <property type="match status" value="1"/>
</dbReference>
<dbReference type="Pfam" id="PF00117">
    <property type="entry name" value="GATase"/>
    <property type="match status" value="1"/>
</dbReference>
<dbReference type="PIRSF" id="PIRSF000495">
    <property type="entry name" value="Amidotransf_hisH"/>
    <property type="match status" value="1"/>
</dbReference>
<dbReference type="SUPFAM" id="SSF52317">
    <property type="entry name" value="Class I glutamine amidotransferase-like"/>
    <property type="match status" value="1"/>
</dbReference>
<dbReference type="PROSITE" id="PS51273">
    <property type="entry name" value="GATASE_TYPE_1"/>
    <property type="match status" value="1"/>
</dbReference>
<proteinExistence type="inferred from homology"/>
<comment type="function">
    <text evidence="1">IGPS catalyzes the conversion of PRFAR and glutamine to IGP, AICAR and glutamate. The HisH subunit catalyzes the hydrolysis of glutamine to glutamate and ammonia as part of the synthesis of IGP and AICAR. The resulting ammonia molecule is channeled to the active site of HisF.</text>
</comment>
<comment type="catalytic activity">
    <reaction evidence="1">
        <text>5-[(5-phospho-1-deoxy-D-ribulos-1-ylimino)methylamino]-1-(5-phospho-beta-D-ribosyl)imidazole-4-carboxamide + L-glutamine = D-erythro-1-(imidazol-4-yl)glycerol 3-phosphate + 5-amino-1-(5-phospho-beta-D-ribosyl)imidazole-4-carboxamide + L-glutamate + H(+)</text>
        <dbReference type="Rhea" id="RHEA:24793"/>
        <dbReference type="ChEBI" id="CHEBI:15378"/>
        <dbReference type="ChEBI" id="CHEBI:29985"/>
        <dbReference type="ChEBI" id="CHEBI:58278"/>
        <dbReference type="ChEBI" id="CHEBI:58359"/>
        <dbReference type="ChEBI" id="CHEBI:58475"/>
        <dbReference type="ChEBI" id="CHEBI:58525"/>
        <dbReference type="EC" id="4.3.2.10"/>
    </reaction>
</comment>
<comment type="catalytic activity">
    <reaction evidence="1">
        <text>L-glutamine + H2O = L-glutamate + NH4(+)</text>
        <dbReference type="Rhea" id="RHEA:15889"/>
        <dbReference type="ChEBI" id="CHEBI:15377"/>
        <dbReference type="ChEBI" id="CHEBI:28938"/>
        <dbReference type="ChEBI" id="CHEBI:29985"/>
        <dbReference type="ChEBI" id="CHEBI:58359"/>
        <dbReference type="EC" id="3.5.1.2"/>
    </reaction>
</comment>
<comment type="pathway">
    <text evidence="1">Amino-acid biosynthesis; L-histidine biosynthesis; L-histidine from 5-phospho-alpha-D-ribose 1-diphosphate: step 5/9.</text>
</comment>
<comment type="subunit">
    <text evidence="1">Heterodimer of HisH and HisF.</text>
</comment>
<comment type="subcellular location">
    <subcellularLocation>
        <location evidence="1">Cytoplasm</location>
    </subcellularLocation>
</comment>
<accession>Q8ESS0</accession>
<reference key="1">
    <citation type="journal article" date="2002" name="Nucleic Acids Res.">
        <title>Genome sequence of Oceanobacillus iheyensis isolated from the Iheya Ridge and its unexpected adaptive capabilities to extreme environments.</title>
        <authorList>
            <person name="Takami H."/>
            <person name="Takaki Y."/>
            <person name="Uchiyama I."/>
        </authorList>
    </citation>
    <scope>NUCLEOTIDE SEQUENCE [LARGE SCALE GENOMIC DNA]</scope>
    <source>
        <strain>DSM 14371 / CIP 107618 / JCM 11309 / KCTC 3954 / HTE831</strain>
    </source>
</reference>
<protein>
    <recommendedName>
        <fullName evidence="1">Imidazole glycerol phosphate synthase subunit HisH</fullName>
        <ecNumber evidence="1">4.3.2.10</ecNumber>
    </recommendedName>
    <alternativeName>
        <fullName evidence="1">IGP synthase glutaminase subunit</fullName>
        <ecNumber evidence="1">3.5.1.2</ecNumber>
    </alternativeName>
    <alternativeName>
        <fullName evidence="1">IGP synthase subunit HisH</fullName>
    </alternativeName>
    <alternativeName>
        <fullName evidence="1">ImGP synthase subunit HisH</fullName>
        <shortName evidence="1">IGPS subunit HisH</shortName>
    </alternativeName>
</protein>
<name>HIS5_OCEIH</name>
<gene>
    <name evidence="1" type="primary">hisH</name>
    <name type="ordered locus">OB0549</name>
</gene>
<keyword id="KW-0028">Amino-acid biosynthesis</keyword>
<keyword id="KW-0963">Cytoplasm</keyword>
<keyword id="KW-0315">Glutamine amidotransferase</keyword>
<keyword id="KW-0368">Histidine biosynthesis</keyword>
<keyword id="KW-0378">Hydrolase</keyword>
<keyword id="KW-0456">Lyase</keyword>
<keyword id="KW-1185">Reference proteome</keyword>
<organism>
    <name type="scientific">Oceanobacillus iheyensis (strain DSM 14371 / CIP 107618 / JCM 11309 / KCTC 3954 / HTE831)</name>
    <dbReference type="NCBI Taxonomy" id="221109"/>
    <lineage>
        <taxon>Bacteria</taxon>
        <taxon>Bacillati</taxon>
        <taxon>Bacillota</taxon>
        <taxon>Bacilli</taxon>
        <taxon>Bacillales</taxon>
        <taxon>Bacillaceae</taxon>
        <taxon>Oceanobacillus</taxon>
    </lineage>
</organism>
<sequence length="201" mass="22322">MIAIIDYGAGNIKSLQFALDKLNKHSIVTTEAAEIKQADSIILPGVGAFKDAMEAIRQLQLDSVIQEEAQKGKPILGICLGMQLFYEQSLENGDWEGLGLLKGSIKRISGEVKVPHMGWNTLDIQQASPLFDSKLENPYVYFVHSYAVSSFEENTLLASSQYGQLIPAIVQKGNITGMQFHPEKSGEFGIELLKRYEEMIR</sequence>
<feature type="chain" id="PRO_0000152400" description="Imidazole glycerol phosphate synthase subunit HisH">
    <location>
        <begin position="1"/>
        <end position="201"/>
    </location>
</feature>
<feature type="domain" description="Glutamine amidotransferase type-1" evidence="1">
    <location>
        <begin position="1"/>
        <end position="201"/>
    </location>
</feature>
<feature type="active site" description="Nucleophile" evidence="1">
    <location>
        <position position="79"/>
    </location>
</feature>
<feature type="active site" evidence="1">
    <location>
        <position position="181"/>
    </location>
</feature>
<feature type="active site" evidence="1">
    <location>
        <position position="183"/>
    </location>
</feature>
<evidence type="ECO:0000255" key="1">
    <source>
        <dbReference type="HAMAP-Rule" id="MF_00278"/>
    </source>
</evidence>